<accession>Q5AG43</accession>
<protein>
    <recommendedName>
        <fullName evidence="2">Small ribosomal subunit protein uS7</fullName>
    </recommendedName>
    <alternativeName>
        <fullName>40S ribosomal protein S5</fullName>
    </alternativeName>
</protein>
<keyword id="KW-0002">3D-structure</keyword>
<keyword id="KW-0963">Cytoplasm</keyword>
<keyword id="KW-1185">Reference proteome</keyword>
<keyword id="KW-0687">Ribonucleoprotein</keyword>
<keyword id="KW-0689">Ribosomal protein</keyword>
<evidence type="ECO:0000269" key="1">
    <source>
    </source>
</evidence>
<evidence type="ECO:0000303" key="2">
    <source>
    </source>
</evidence>
<evidence type="ECO:0000305" key="3"/>
<evidence type="ECO:0000305" key="4">
    <source>
    </source>
</evidence>
<evidence type="ECO:0007744" key="5">
    <source>
        <dbReference type="PDB" id="7PZY"/>
    </source>
</evidence>
<evidence type="ECO:0007744" key="6">
    <source>
        <dbReference type="PDB" id="7Q0F"/>
    </source>
</evidence>
<evidence type="ECO:0007744" key="7">
    <source>
        <dbReference type="PDB" id="7Q0P"/>
    </source>
</evidence>
<name>RS5_CANAL</name>
<dbReference type="EMBL" id="CP017627">
    <property type="protein sequence ID" value="AOW29727.1"/>
    <property type="molecule type" value="Genomic_DNA"/>
</dbReference>
<dbReference type="RefSeq" id="XP_720641.1">
    <property type="nucleotide sequence ID" value="XM_715548.1"/>
</dbReference>
<dbReference type="PDB" id="7PZY">
    <property type="method" value="EM"/>
    <property type="resolution" value="2.32 A"/>
    <property type="chains" value="G=1-225"/>
</dbReference>
<dbReference type="PDB" id="7Q08">
    <property type="method" value="EM"/>
    <property type="resolution" value="2.56 A"/>
    <property type="chains" value="G=1-225"/>
</dbReference>
<dbReference type="PDB" id="7Q0F">
    <property type="method" value="EM"/>
    <property type="resolution" value="2.64 A"/>
    <property type="chains" value="G=1-225"/>
</dbReference>
<dbReference type="PDB" id="7Q0P">
    <property type="method" value="EM"/>
    <property type="resolution" value="2.77 A"/>
    <property type="chains" value="G=1-225"/>
</dbReference>
<dbReference type="PDB" id="7Q0R">
    <property type="method" value="EM"/>
    <property type="resolution" value="2.67 A"/>
    <property type="chains" value="G=1-225"/>
</dbReference>
<dbReference type="PDB" id="8C3A">
    <property type="method" value="X-ray"/>
    <property type="resolution" value="3.00 A"/>
    <property type="chains" value="CS/H=1-225"/>
</dbReference>
<dbReference type="PDB" id="8OGJ">
    <property type="method" value="EM"/>
    <property type="resolution" value="3.10 A"/>
    <property type="chains" value="G=1-225"/>
</dbReference>
<dbReference type="PDB" id="8OH6">
    <property type="method" value="X-ray"/>
    <property type="resolution" value="3.35 A"/>
    <property type="chains" value="CS/H=1-225"/>
</dbReference>
<dbReference type="PDB" id="8OI5">
    <property type="method" value="X-ray"/>
    <property type="resolution" value="2.90 A"/>
    <property type="chains" value="CS/H=1-225"/>
</dbReference>
<dbReference type="PDB" id="8OJ3">
    <property type="method" value="X-ray"/>
    <property type="resolution" value="3.50 A"/>
    <property type="chains" value="CS/H=1-225"/>
</dbReference>
<dbReference type="PDBsum" id="7PZY"/>
<dbReference type="PDBsum" id="7Q08"/>
<dbReference type="PDBsum" id="7Q0F"/>
<dbReference type="PDBsum" id="7Q0P"/>
<dbReference type="PDBsum" id="7Q0R"/>
<dbReference type="PDBsum" id="8C3A"/>
<dbReference type="PDBsum" id="8OGJ"/>
<dbReference type="PDBsum" id="8OH6"/>
<dbReference type="PDBsum" id="8OI5"/>
<dbReference type="PDBsum" id="8OJ3"/>
<dbReference type="EMDB" id="EMD-13737"/>
<dbReference type="EMDB" id="EMD-13741"/>
<dbReference type="EMDB" id="EMD-13744"/>
<dbReference type="EMDB" id="EMD-13749"/>
<dbReference type="EMDB" id="EMD-13750"/>
<dbReference type="SMR" id="Q5AG43"/>
<dbReference type="FunCoup" id="Q5AG43">
    <property type="interactions" value="1096"/>
</dbReference>
<dbReference type="STRING" id="237561.Q5AG43"/>
<dbReference type="EnsemblFungi" id="C5_03070W_A-T">
    <property type="protein sequence ID" value="C5_03070W_A-T-p1"/>
    <property type="gene ID" value="C5_03070W_A"/>
</dbReference>
<dbReference type="GeneID" id="3637700"/>
<dbReference type="KEGG" id="cal:CAALFM_C503070WA"/>
<dbReference type="CGD" id="CAL0000175293">
    <property type="gene designation" value="RPS5"/>
</dbReference>
<dbReference type="VEuPathDB" id="FungiDB:C5_03070W_A"/>
<dbReference type="eggNOG" id="KOG3291">
    <property type="taxonomic scope" value="Eukaryota"/>
</dbReference>
<dbReference type="HOGENOM" id="CLU_063975_0_0_1"/>
<dbReference type="InParanoid" id="Q5AG43"/>
<dbReference type="OMA" id="KMNIVER"/>
<dbReference type="OrthoDB" id="10264639at2759"/>
<dbReference type="Proteomes" id="UP000000559">
    <property type="component" value="Chromosome 5"/>
</dbReference>
<dbReference type="GO" id="GO:0022627">
    <property type="term" value="C:cytosolic small ribosomal subunit"/>
    <property type="evidence" value="ECO:0000318"/>
    <property type="project" value="GO_Central"/>
</dbReference>
<dbReference type="GO" id="GO:0016020">
    <property type="term" value="C:membrane"/>
    <property type="evidence" value="ECO:0000314"/>
    <property type="project" value="CGD"/>
</dbReference>
<dbReference type="GO" id="GO:0005840">
    <property type="term" value="C:ribosome"/>
    <property type="evidence" value="ECO:0000318"/>
    <property type="project" value="GO_Central"/>
</dbReference>
<dbReference type="GO" id="GO:0003729">
    <property type="term" value="F:mRNA binding"/>
    <property type="evidence" value="ECO:0000318"/>
    <property type="project" value="GO_Central"/>
</dbReference>
<dbReference type="GO" id="GO:0019843">
    <property type="term" value="F:rRNA binding"/>
    <property type="evidence" value="ECO:0000318"/>
    <property type="project" value="GO_Central"/>
</dbReference>
<dbReference type="GO" id="GO:0003735">
    <property type="term" value="F:structural constituent of ribosome"/>
    <property type="evidence" value="ECO:0000318"/>
    <property type="project" value="GO_Central"/>
</dbReference>
<dbReference type="GO" id="GO:0030490">
    <property type="term" value="P:maturation of SSU-rRNA"/>
    <property type="evidence" value="ECO:0007669"/>
    <property type="project" value="EnsemblFungi"/>
</dbReference>
<dbReference type="GO" id="GO:0000028">
    <property type="term" value="P:ribosomal small subunit assembly"/>
    <property type="evidence" value="ECO:0000318"/>
    <property type="project" value="GO_Central"/>
</dbReference>
<dbReference type="GO" id="GO:0000054">
    <property type="term" value="P:ribosomal subunit export from nucleus"/>
    <property type="evidence" value="ECO:0007669"/>
    <property type="project" value="EnsemblFungi"/>
</dbReference>
<dbReference type="GO" id="GO:0006412">
    <property type="term" value="P:translation"/>
    <property type="evidence" value="ECO:0000318"/>
    <property type="project" value="GO_Central"/>
</dbReference>
<dbReference type="CDD" id="cd14867">
    <property type="entry name" value="uS7_Eukaryote"/>
    <property type="match status" value="1"/>
</dbReference>
<dbReference type="FunFam" id="1.10.455.10:FF:000002">
    <property type="entry name" value="40S ribosomal protein S5"/>
    <property type="match status" value="1"/>
</dbReference>
<dbReference type="Gene3D" id="1.10.455.10">
    <property type="entry name" value="Ribosomal protein S7 domain"/>
    <property type="match status" value="1"/>
</dbReference>
<dbReference type="InterPro" id="IPR000235">
    <property type="entry name" value="Ribosomal_uS7"/>
</dbReference>
<dbReference type="InterPro" id="IPR020606">
    <property type="entry name" value="Ribosomal_uS7_CS"/>
</dbReference>
<dbReference type="InterPro" id="IPR023798">
    <property type="entry name" value="Ribosomal_uS7_dom"/>
</dbReference>
<dbReference type="InterPro" id="IPR036823">
    <property type="entry name" value="Ribosomal_uS7_dom_sf"/>
</dbReference>
<dbReference type="InterPro" id="IPR005716">
    <property type="entry name" value="Ribosomal_uS7_euk/arc"/>
</dbReference>
<dbReference type="NCBIfam" id="NF003106">
    <property type="entry name" value="PRK04027.1"/>
    <property type="match status" value="1"/>
</dbReference>
<dbReference type="NCBIfam" id="TIGR01028">
    <property type="entry name" value="uS7_euk_arch"/>
    <property type="match status" value="1"/>
</dbReference>
<dbReference type="PANTHER" id="PTHR11205">
    <property type="entry name" value="RIBOSOMAL PROTEIN S7"/>
    <property type="match status" value="1"/>
</dbReference>
<dbReference type="Pfam" id="PF00177">
    <property type="entry name" value="Ribosomal_S7"/>
    <property type="match status" value="1"/>
</dbReference>
<dbReference type="PIRSF" id="PIRSF002122">
    <property type="entry name" value="RPS7p_RPS7a_RPS5e_RPS7o"/>
    <property type="match status" value="1"/>
</dbReference>
<dbReference type="SUPFAM" id="SSF47973">
    <property type="entry name" value="Ribosomal protein S7"/>
    <property type="match status" value="1"/>
</dbReference>
<dbReference type="PROSITE" id="PS00052">
    <property type="entry name" value="RIBOSOMAL_S7"/>
    <property type="match status" value="1"/>
</dbReference>
<reference key="1">
    <citation type="journal article" date="2004" name="Proc. Natl. Acad. Sci. U.S.A.">
        <title>The diploid genome sequence of Candida albicans.</title>
        <authorList>
            <person name="Jones T."/>
            <person name="Federspiel N.A."/>
            <person name="Chibana H."/>
            <person name="Dungan J."/>
            <person name="Kalman S."/>
            <person name="Magee B.B."/>
            <person name="Newport G."/>
            <person name="Thorstenson Y.R."/>
            <person name="Agabian N."/>
            <person name="Magee P.T."/>
            <person name="Davis R.W."/>
            <person name="Scherer S."/>
        </authorList>
    </citation>
    <scope>NUCLEOTIDE SEQUENCE [LARGE SCALE GENOMIC DNA]</scope>
    <source>
        <strain>SC5314 / ATCC MYA-2876</strain>
    </source>
</reference>
<reference key="2">
    <citation type="journal article" date="2007" name="Genome Biol.">
        <title>Assembly of the Candida albicans genome into sixteen supercontigs aligned on the eight chromosomes.</title>
        <authorList>
            <person name="van het Hoog M."/>
            <person name="Rast T.J."/>
            <person name="Martchenko M."/>
            <person name="Grindle S."/>
            <person name="Dignard D."/>
            <person name="Hogues H."/>
            <person name="Cuomo C."/>
            <person name="Berriman M."/>
            <person name="Scherer S."/>
            <person name="Magee B.B."/>
            <person name="Whiteway M."/>
            <person name="Chibana H."/>
            <person name="Nantel A."/>
            <person name="Magee P.T."/>
        </authorList>
    </citation>
    <scope>GENOME REANNOTATION</scope>
    <source>
        <strain>SC5314 / ATCC MYA-2876</strain>
    </source>
</reference>
<reference key="3">
    <citation type="journal article" date="2013" name="Genome Biol.">
        <title>Assembly of a phased diploid Candida albicans genome facilitates allele-specific measurements and provides a simple model for repeat and indel structure.</title>
        <authorList>
            <person name="Muzzey D."/>
            <person name="Schwartz K."/>
            <person name="Weissman J.S."/>
            <person name="Sherlock G."/>
        </authorList>
    </citation>
    <scope>NUCLEOTIDE SEQUENCE [LARGE SCALE GENOMIC DNA]</scope>
    <scope>GENOME REANNOTATION</scope>
    <source>
        <strain>SC5314 / ATCC MYA-2876</strain>
    </source>
</reference>
<reference evidence="5 6 7" key="4">
    <citation type="journal article" date="2022" name="Sci. Adv.">
        <title>E-site drug specificity of the human pathogen Candida albicans ribosome.</title>
        <authorList>
            <person name="Zgadzay Y."/>
            <person name="Kolosova O."/>
            <person name="Stetsenko A."/>
            <person name="Wu C."/>
            <person name="Bruchlen D."/>
            <person name="Usachev K."/>
            <person name="Validov S."/>
            <person name="Jenner L."/>
            <person name="Rogachev A."/>
            <person name="Yusupova G."/>
            <person name="Sachs M.S."/>
            <person name="Guskov A."/>
            <person name="Yusupov M."/>
        </authorList>
    </citation>
    <scope>STRUCTURE BY ELECTRON MICROSCOPY (2.32 ANGSTROMS) OF THE 80S RIBOSOME</scope>
    <scope>SUBUNIT</scope>
</reference>
<organism>
    <name type="scientific">Candida albicans (strain SC5314 / ATCC MYA-2876)</name>
    <name type="common">Yeast</name>
    <dbReference type="NCBI Taxonomy" id="237561"/>
    <lineage>
        <taxon>Eukaryota</taxon>
        <taxon>Fungi</taxon>
        <taxon>Dikarya</taxon>
        <taxon>Ascomycota</taxon>
        <taxon>Saccharomycotina</taxon>
        <taxon>Pichiomycetes</taxon>
        <taxon>Debaryomycetaceae</taxon>
        <taxon>Candida/Lodderomyces clade</taxon>
        <taxon>Candida</taxon>
    </lineage>
</organism>
<comment type="function">
    <text evidence="4">Component of the ribosome, a large ribonucleoprotein complex responsible for the synthesis of proteins in the cell. The small ribosomal subunit (SSU) binds messenger RNAs (mRNAs) and translates the encoded message by selecting cognate aminoacyl-transfer RNA (tRNA) molecules. The large subunit (LSU) contains the ribosomal catalytic site termed the peptidyl transferase center (PTC), which catalyzes the formation of peptide bonds, thereby polymerizing the amino acids delivered by tRNAs into a polypeptide chain. The nascent polypeptides leave the ribosome through a tunnel in the LSU and interact with protein factors that function in enzymatic processing, targeting, and the membrane insertion of nascent chains at the exit of the ribosomal tunnel.</text>
</comment>
<comment type="subunit">
    <text evidence="1">Component of the small ribosomal subunit (PubMed:35613268). Mature ribosomes consist of a small (40S) and a large (60S) subunit (PubMed:35613268). The 40S subunit contains about 32 different proteins and 1 molecule of RNA (18S) (PubMed:35613268). The 60S subunit contains 45 different proteins and 3 molecules of RNA (25S, 5.8S and 5S) (PubMed:35613268).</text>
</comment>
<comment type="subcellular location">
    <subcellularLocation>
        <location evidence="4">Cytoplasm</location>
    </subcellularLocation>
</comment>
<comment type="similarity">
    <text evidence="3">Belongs to the universal ribosomal protein uS7 family.</text>
</comment>
<gene>
    <name type="primary">RPS5</name>
    <name type="ordered locus">orf19.4336</name>
    <name type="ORF">CAALFM_C503070WA</name>
</gene>
<proteinExistence type="evidence at protein level"/>
<feature type="chain" id="PRO_0000456543" description="Small ribosomal subunit protein uS7">
    <location>
        <begin position="1"/>
        <end position="225"/>
    </location>
</feature>
<sequence>MSDVEEQYQEEQQPVVQEELQVVELATTIPLDVQEAQREVKLFNKWSFEDVEVKDVSLVDYIQIRNPVFVSHTAGKYASKRFRKAQCPIVERLTNSLMMNGRNNGKKLKAVRIVKHALEIIHVLTEQNPIQVVVDAIVNSGAREDSTRIGSSGTVRRQAVDVSPLRRVNQAIALLTIGAREASFRNIKTIAECLAEELINAAKGSSTSYAIKKKDELERVAKSNR</sequence>